<protein>
    <recommendedName>
        <fullName evidence="1">PF03932 family protein CutC</fullName>
    </recommendedName>
</protein>
<feature type="chain" id="PRO_1000133851" description="PF03932 family protein CutC">
    <location>
        <begin position="1"/>
        <end position="247"/>
    </location>
</feature>
<name>CUTC_ALIFM</name>
<sequence length="247" mass="26378">MSIQIEVCIDNLESLHNAITGGADRIELCSSLALGGLTPSFGFMKKAAEISPIPVYAMIRPRQGDFLYDNDDIAAMISDIQAAKLAGLQGVVFGVLKANGDIDMPLSARLMKIANDNDLGVTFHRAIDQCSNYKKAIENIAELGCERILTSGLAANAYDGINVLADMVKLANGRFDILAGAGVTAENAKEIIEKTGVKEVHLSGKSTRPSKMKLILDGVKMGAGDLDDFIVPVTDAKKIDAVKQRIK</sequence>
<gene>
    <name evidence="1" type="primary">cutC</name>
    <name type="ordered locus">VFMJ11_2110</name>
</gene>
<evidence type="ECO:0000255" key="1">
    <source>
        <dbReference type="HAMAP-Rule" id="MF_00795"/>
    </source>
</evidence>
<proteinExistence type="inferred from homology"/>
<organism>
    <name type="scientific">Aliivibrio fischeri (strain MJ11)</name>
    <name type="common">Vibrio fischeri</name>
    <dbReference type="NCBI Taxonomy" id="388396"/>
    <lineage>
        <taxon>Bacteria</taxon>
        <taxon>Pseudomonadati</taxon>
        <taxon>Pseudomonadota</taxon>
        <taxon>Gammaproteobacteria</taxon>
        <taxon>Vibrionales</taxon>
        <taxon>Vibrionaceae</taxon>
        <taxon>Aliivibrio</taxon>
    </lineage>
</organism>
<dbReference type="EMBL" id="CP001139">
    <property type="protein sequence ID" value="ACH65500.1"/>
    <property type="molecule type" value="Genomic_DNA"/>
</dbReference>
<dbReference type="RefSeq" id="WP_012533098.1">
    <property type="nucleotide sequence ID" value="NC_011184.1"/>
</dbReference>
<dbReference type="SMR" id="B5F9Z0"/>
<dbReference type="KEGG" id="vfm:VFMJ11_2110"/>
<dbReference type="HOGENOM" id="CLU_050555_3_1_6"/>
<dbReference type="Proteomes" id="UP000001857">
    <property type="component" value="Chromosome I"/>
</dbReference>
<dbReference type="GO" id="GO:0005737">
    <property type="term" value="C:cytoplasm"/>
    <property type="evidence" value="ECO:0007669"/>
    <property type="project" value="UniProtKB-SubCell"/>
</dbReference>
<dbReference type="GO" id="GO:0005507">
    <property type="term" value="F:copper ion binding"/>
    <property type="evidence" value="ECO:0007669"/>
    <property type="project" value="TreeGrafter"/>
</dbReference>
<dbReference type="FunFam" id="3.20.20.380:FF:000001">
    <property type="entry name" value="Copper homeostasis protein CutC"/>
    <property type="match status" value="1"/>
</dbReference>
<dbReference type="Gene3D" id="3.20.20.380">
    <property type="entry name" value="Copper homeostasis (CutC) domain"/>
    <property type="match status" value="1"/>
</dbReference>
<dbReference type="HAMAP" id="MF_00795">
    <property type="entry name" value="CutC"/>
    <property type="match status" value="1"/>
</dbReference>
<dbReference type="InterPro" id="IPR005627">
    <property type="entry name" value="CutC-like"/>
</dbReference>
<dbReference type="InterPro" id="IPR036822">
    <property type="entry name" value="CutC-like_dom_sf"/>
</dbReference>
<dbReference type="PANTHER" id="PTHR12598">
    <property type="entry name" value="COPPER HOMEOSTASIS PROTEIN CUTC"/>
    <property type="match status" value="1"/>
</dbReference>
<dbReference type="PANTHER" id="PTHR12598:SF0">
    <property type="entry name" value="COPPER HOMEOSTASIS PROTEIN CUTC HOMOLOG"/>
    <property type="match status" value="1"/>
</dbReference>
<dbReference type="Pfam" id="PF03932">
    <property type="entry name" value="CutC"/>
    <property type="match status" value="1"/>
</dbReference>
<dbReference type="SUPFAM" id="SSF110395">
    <property type="entry name" value="CutC-like"/>
    <property type="match status" value="1"/>
</dbReference>
<accession>B5F9Z0</accession>
<comment type="subcellular location">
    <subcellularLocation>
        <location evidence="1">Cytoplasm</location>
    </subcellularLocation>
</comment>
<comment type="similarity">
    <text evidence="1">Belongs to the CutC family.</text>
</comment>
<comment type="caution">
    <text evidence="1">Once thought to be involved in copper homeostasis, experiments in E.coli have shown this is not the case.</text>
</comment>
<reference key="1">
    <citation type="submission" date="2008-08" db="EMBL/GenBank/DDBJ databases">
        <title>Complete sequence of Vibrio fischeri strain MJ11.</title>
        <authorList>
            <person name="Mandel M.J."/>
            <person name="Stabb E.V."/>
            <person name="Ruby E.G."/>
            <person name="Ferriera S."/>
            <person name="Johnson J."/>
            <person name="Kravitz S."/>
            <person name="Beeson K."/>
            <person name="Sutton G."/>
            <person name="Rogers Y.-H."/>
            <person name="Friedman R."/>
            <person name="Frazier M."/>
            <person name="Venter J.C."/>
        </authorList>
    </citation>
    <scope>NUCLEOTIDE SEQUENCE [LARGE SCALE GENOMIC DNA]</scope>
    <source>
        <strain>MJ11</strain>
    </source>
</reference>
<keyword id="KW-0963">Cytoplasm</keyword>